<accession>Q17433</accession>
<protein>
    <recommendedName>
        <fullName>DnaJ homolog dnj-2</fullName>
    </recommendedName>
    <alternativeName>
        <fullName>DnaJ domain protein 2</fullName>
    </alternativeName>
</protein>
<organism>
    <name type="scientific">Caenorhabditis elegans</name>
    <dbReference type="NCBI Taxonomy" id="6239"/>
    <lineage>
        <taxon>Eukaryota</taxon>
        <taxon>Metazoa</taxon>
        <taxon>Ecdysozoa</taxon>
        <taxon>Nematoda</taxon>
        <taxon>Chromadorea</taxon>
        <taxon>Rhabditida</taxon>
        <taxon>Rhabditina</taxon>
        <taxon>Rhabditomorpha</taxon>
        <taxon>Rhabditoidea</taxon>
        <taxon>Rhabditidae</taxon>
        <taxon>Peloderinae</taxon>
        <taxon>Caenorhabditis</taxon>
    </lineage>
</organism>
<proteinExistence type="evidence at protein level"/>
<reference key="1">
    <citation type="journal article" date="1998" name="Science">
        <title>Genome sequence of the nematode C. elegans: a platform for investigating biology.</title>
        <authorList>
            <consortium name="The C. elegans sequencing consortium"/>
        </authorList>
    </citation>
    <scope>NUCLEOTIDE SEQUENCE [LARGE SCALE GENOMIC DNA]</scope>
    <source>
        <strain>Bristol N2</strain>
    </source>
</reference>
<reference key="2">
    <citation type="submission" date="2007-08" db="PDB data bank">
        <title>X-ray crystal structure of j-domain of DNAj homolog dnj-2 precursor from c.elegans.</title>
        <authorList>
            <consortium name="Midwest center for structural genomics (MCSG)"/>
        </authorList>
    </citation>
    <scope>X-RAY CRYSTALLOGRAPHY (1.68 ANGSTROMS) OF 23-129</scope>
</reference>
<evidence type="ECO:0000255" key="1"/>
<evidence type="ECO:0000255" key="2">
    <source>
        <dbReference type="PROSITE-ProRule" id="PRU00286"/>
    </source>
</evidence>
<evidence type="ECO:0000305" key="3"/>
<evidence type="ECO:0007829" key="4">
    <source>
        <dbReference type="PDB" id="2QSA"/>
    </source>
</evidence>
<name>DNJ2_CAEEL</name>
<keyword id="KW-0002">3D-structure</keyword>
<keyword id="KW-0143">Chaperone</keyword>
<keyword id="KW-0175">Coiled coil</keyword>
<keyword id="KW-0472">Membrane</keyword>
<keyword id="KW-1185">Reference proteome</keyword>
<keyword id="KW-0812">Transmembrane</keyword>
<keyword id="KW-1133">Transmembrane helix</keyword>
<gene>
    <name type="primary">dnj-2</name>
    <name type="ORF">B0035.2</name>
</gene>
<sequence length="337" mass="39993">MRSAIAAPILFLLVSFFVQECESVGFAPELYCGLENCYDVLEVNREEFDKQKLAKAYRALARKHHPDRVKNKEEKLLAEERFRVIATAYETLKDDEAKTNYDYYLDHPDQRFYNYYQYYRLRAAPKVDLRIVIVGTILIISLFQFLSAKHKFSEAIEYATGVGKFRNMAIKDGIDKGLLEMDRNGKLKKNKGVDNDEVIKQIIIDNLDVTGGYKRESIYDTLAWHTIIFPLTIFRYIKWTALWYWRFAIQKEEYDDDAKLYLIRKYIGVSQMEFDQKYTDEDIDDLFERECWLKRNCATWKAERDAAEQEKMAQSGRYKRYKRYMKNAGTISFVDED</sequence>
<comment type="subcellular location">
    <subcellularLocation>
        <location evidence="3">Membrane</location>
        <topology evidence="3">Multi-pass membrane protein</topology>
    </subcellularLocation>
</comment>
<comment type="similarity">
    <text evidence="3">Belongs to the DNAJC25 family.</text>
</comment>
<dbReference type="EMBL" id="Z73102">
    <property type="protein sequence ID" value="CAA97409.1"/>
    <property type="molecule type" value="Genomic_DNA"/>
</dbReference>
<dbReference type="PIR" id="T18654">
    <property type="entry name" value="T18654"/>
</dbReference>
<dbReference type="RefSeq" id="NP_502126.1">
    <property type="nucleotide sequence ID" value="NM_069725.6"/>
</dbReference>
<dbReference type="PDB" id="2QSA">
    <property type="method" value="X-ray"/>
    <property type="resolution" value="1.68 A"/>
    <property type="chains" value="A=24-129"/>
</dbReference>
<dbReference type="PDBsum" id="2QSA"/>
<dbReference type="SMR" id="Q17433"/>
<dbReference type="BioGRID" id="43142">
    <property type="interactions" value="3"/>
</dbReference>
<dbReference type="DIP" id="DIP-24486N"/>
<dbReference type="FunCoup" id="Q17433">
    <property type="interactions" value="2133"/>
</dbReference>
<dbReference type="STRING" id="6239.B0035.2.1"/>
<dbReference type="PaxDb" id="6239-B0035.2"/>
<dbReference type="PeptideAtlas" id="Q17433"/>
<dbReference type="EnsemblMetazoa" id="B0035.2.1">
    <property type="protein sequence ID" value="B0035.2.1"/>
    <property type="gene ID" value="WBGene00001020"/>
</dbReference>
<dbReference type="GeneID" id="178043"/>
<dbReference type="KEGG" id="cel:CELE_B0035.2"/>
<dbReference type="UCSC" id="B0035.2">
    <property type="organism name" value="c. elegans"/>
</dbReference>
<dbReference type="AGR" id="WB:WBGene00001020"/>
<dbReference type="CTD" id="178043"/>
<dbReference type="WormBase" id="B0035.2">
    <property type="protein sequence ID" value="CE05160"/>
    <property type="gene ID" value="WBGene00001020"/>
    <property type="gene designation" value="dnj-2"/>
</dbReference>
<dbReference type="eggNOG" id="KOG0722">
    <property type="taxonomic scope" value="Eukaryota"/>
</dbReference>
<dbReference type="GeneTree" id="ENSGT00970000196461"/>
<dbReference type="HOGENOM" id="CLU_055735_0_0_1"/>
<dbReference type="InParanoid" id="Q17433"/>
<dbReference type="OMA" id="WFWRYTV"/>
<dbReference type="OrthoDB" id="270167at2759"/>
<dbReference type="PhylomeDB" id="Q17433"/>
<dbReference type="EvolutionaryTrace" id="Q17433"/>
<dbReference type="PRO" id="PR:Q17433"/>
<dbReference type="Proteomes" id="UP000001940">
    <property type="component" value="Chromosome IV"/>
</dbReference>
<dbReference type="Bgee" id="WBGene00001020">
    <property type="expression patterns" value="Expressed in germ line (C elegans) and 4 other cell types or tissues"/>
</dbReference>
<dbReference type="GO" id="GO:0005789">
    <property type="term" value="C:endoplasmic reticulum membrane"/>
    <property type="evidence" value="ECO:0000318"/>
    <property type="project" value="GO_Central"/>
</dbReference>
<dbReference type="GO" id="GO:0006457">
    <property type="term" value="P:protein folding"/>
    <property type="evidence" value="ECO:0000318"/>
    <property type="project" value="GO_Central"/>
</dbReference>
<dbReference type="CDD" id="cd06257">
    <property type="entry name" value="DnaJ"/>
    <property type="match status" value="1"/>
</dbReference>
<dbReference type="FunFam" id="1.10.287.110:FF:000036">
    <property type="entry name" value="dnaJ homolog subfamily C member 25"/>
    <property type="match status" value="1"/>
</dbReference>
<dbReference type="Gene3D" id="1.10.287.110">
    <property type="entry name" value="DnaJ domain"/>
    <property type="match status" value="1"/>
</dbReference>
<dbReference type="InterPro" id="IPR001623">
    <property type="entry name" value="DnaJ_domain"/>
</dbReference>
<dbReference type="InterPro" id="IPR018253">
    <property type="entry name" value="DnaJ_domain_CS"/>
</dbReference>
<dbReference type="InterPro" id="IPR044632">
    <property type="entry name" value="DNAJC25-like"/>
</dbReference>
<dbReference type="InterPro" id="IPR036869">
    <property type="entry name" value="J_dom_sf"/>
</dbReference>
<dbReference type="PANTHER" id="PTHR44176">
    <property type="entry name" value="DNAJ HOMOLOG SUBFAMILY C MEMBER 25"/>
    <property type="match status" value="1"/>
</dbReference>
<dbReference type="PANTHER" id="PTHR44176:SF1">
    <property type="entry name" value="DNAJ HOMOLOG SUBFAMILY C MEMBER 25"/>
    <property type="match status" value="1"/>
</dbReference>
<dbReference type="Pfam" id="PF00226">
    <property type="entry name" value="DnaJ"/>
    <property type="match status" value="1"/>
</dbReference>
<dbReference type="PRINTS" id="PR00625">
    <property type="entry name" value="JDOMAIN"/>
</dbReference>
<dbReference type="SMART" id="SM00271">
    <property type="entry name" value="DnaJ"/>
    <property type="match status" value="1"/>
</dbReference>
<dbReference type="SUPFAM" id="SSF46565">
    <property type="entry name" value="Chaperone J-domain"/>
    <property type="match status" value="1"/>
</dbReference>
<dbReference type="PROSITE" id="PS00636">
    <property type="entry name" value="DNAJ_1"/>
    <property type="match status" value="1"/>
</dbReference>
<dbReference type="PROSITE" id="PS50076">
    <property type="entry name" value="DNAJ_2"/>
    <property type="match status" value="1"/>
</dbReference>
<feature type="chain" id="PRO_0000007269" description="DnaJ homolog dnj-2">
    <location>
        <begin position="1"/>
        <end position="337"/>
    </location>
</feature>
<feature type="transmembrane region" description="Helical" evidence="1">
    <location>
        <begin position="4"/>
        <end position="24"/>
    </location>
</feature>
<feature type="transmembrane region" description="Helical" evidence="1">
    <location>
        <begin position="127"/>
        <end position="147"/>
    </location>
</feature>
<feature type="transmembrane region" description="Helical" evidence="1">
    <location>
        <begin position="222"/>
        <end position="242"/>
    </location>
</feature>
<feature type="domain" description="J" evidence="2">
    <location>
        <begin position="36"/>
        <end position="105"/>
    </location>
</feature>
<feature type="coiled-coil region" evidence="1">
    <location>
        <begin position="293"/>
        <end position="323"/>
    </location>
</feature>
<feature type="turn" evidence="4">
    <location>
        <begin position="31"/>
        <end position="34"/>
    </location>
</feature>
<feature type="helix" evidence="4">
    <location>
        <begin position="37"/>
        <end position="40"/>
    </location>
</feature>
<feature type="helix" evidence="4">
    <location>
        <begin position="45"/>
        <end position="47"/>
    </location>
</feature>
<feature type="helix" evidence="4">
    <location>
        <begin position="50"/>
        <end position="63"/>
    </location>
</feature>
<feature type="helix" evidence="4">
    <location>
        <begin position="66"/>
        <end position="68"/>
    </location>
</feature>
<feature type="helix" evidence="4">
    <location>
        <begin position="72"/>
        <end position="93"/>
    </location>
</feature>
<feature type="helix" evidence="4">
    <location>
        <begin position="95"/>
        <end position="106"/>
    </location>
</feature>
<feature type="helix" evidence="4">
    <location>
        <begin position="111"/>
        <end position="121"/>
    </location>
</feature>